<proteinExistence type="inferred from homology"/>
<name>HIS7_PROM5</name>
<dbReference type="EC" id="4.2.1.19" evidence="1"/>
<dbReference type="EMBL" id="CP000552">
    <property type="protein sequence ID" value="ABM71523.1"/>
    <property type="molecule type" value="Genomic_DNA"/>
</dbReference>
<dbReference type="RefSeq" id="WP_011819632.1">
    <property type="nucleotide sequence ID" value="NC_008817.1"/>
</dbReference>
<dbReference type="SMR" id="A2BUR2"/>
<dbReference type="STRING" id="167542.P9515_03141"/>
<dbReference type="GeneID" id="60200479"/>
<dbReference type="KEGG" id="pmc:P9515_03141"/>
<dbReference type="eggNOG" id="COG0131">
    <property type="taxonomic scope" value="Bacteria"/>
</dbReference>
<dbReference type="HOGENOM" id="CLU_044308_3_0_3"/>
<dbReference type="OrthoDB" id="9790411at2"/>
<dbReference type="UniPathway" id="UPA00031">
    <property type="reaction ID" value="UER00011"/>
</dbReference>
<dbReference type="Proteomes" id="UP000001589">
    <property type="component" value="Chromosome"/>
</dbReference>
<dbReference type="GO" id="GO:0005737">
    <property type="term" value="C:cytoplasm"/>
    <property type="evidence" value="ECO:0007669"/>
    <property type="project" value="UniProtKB-SubCell"/>
</dbReference>
<dbReference type="GO" id="GO:0004424">
    <property type="term" value="F:imidazoleglycerol-phosphate dehydratase activity"/>
    <property type="evidence" value="ECO:0007669"/>
    <property type="project" value="UniProtKB-UniRule"/>
</dbReference>
<dbReference type="GO" id="GO:0000105">
    <property type="term" value="P:L-histidine biosynthetic process"/>
    <property type="evidence" value="ECO:0007669"/>
    <property type="project" value="UniProtKB-UniRule"/>
</dbReference>
<dbReference type="CDD" id="cd07914">
    <property type="entry name" value="IGPD"/>
    <property type="match status" value="1"/>
</dbReference>
<dbReference type="FunFam" id="3.30.230.40:FF:000002">
    <property type="entry name" value="Imidazoleglycerol-phosphate dehydratase"/>
    <property type="match status" value="1"/>
</dbReference>
<dbReference type="FunFam" id="3.30.230.40:FF:000003">
    <property type="entry name" value="Imidazoleglycerol-phosphate dehydratase HisB"/>
    <property type="match status" value="1"/>
</dbReference>
<dbReference type="Gene3D" id="3.30.230.40">
    <property type="entry name" value="Imidazole glycerol phosphate dehydratase, domain 1"/>
    <property type="match status" value="2"/>
</dbReference>
<dbReference type="HAMAP" id="MF_00076">
    <property type="entry name" value="HisB"/>
    <property type="match status" value="1"/>
</dbReference>
<dbReference type="InterPro" id="IPR038494">
    <property type="entry name" value="IGPD_sf"/>
</dbReference>
<dbReference type="InterPro" id="IPR000807">
    <property type="entry name" value="ImidazoleglycerolP_deHydtase"/>
</dbReference>
<dbReference type="InterPro" id="IPR020565">
    <property type="entry name" value="ImidazoleglycerP_deHydtase_CS"/>
</dbReference>
<dbReference type="InterPro" id="IPR020568">
    <property type="entry name" value="Ribosomal_Su5_D2-typ_SF"/>
</dbReference>
<dbReference type="NCBIfam" id="NF002108">
    <property type="entry name" value="PRK00951.1-3"/>
    <property type="match status" value="1"/>
</dbReference>
<dbReference type="NCBIfam" id="NF002109">
    <property type="entry name" value="PRK00951.1-5"/>
    <property type="match status" value="1"/>
</dbReference>
<dbReference type="NCBIfam" id="NF002111">
    <property type="entry name" value="PRK00951.2-1"/>
    <property type="match status" value="1"/>
</dbReference>
<dbReference type="NCBIfam" id="NF002114">
    <property type="entry name" value="PRK00951.2-4"/>
    <property type="match status" value="1"/>
</dbReference>
<dbReference type="PANTHER" id="PTHR23133:SF2">
    <property type="entry name" value="IMIDAZOLEGLYCEROL-PHOSPHATE DEHYDRATASE"/>
    <property type="match status" value="1"/>
</dbReference>
<dbReference type="PANTHER" id="PTHR23133">
    <property type="entry name" value="IMIDAZOLEGLYCEROL-PHOSPHATE DEHYDRATASE HIS7"/>
    <property type="match status" value="1"/>
</dbReference>
<dbReference type="Pfam" id="PF00475">
    <property type="entry name" value="IGPD"/>
    <property type="match status" value="1"/>
</dbReference>
<dbReference type="SUPFAM" id="SSF54211">
    <property type="entry name" value="Ribosomal protein S5 domain 2-like"/>
    <property type="match status" value="2"/>
</dbReference>
<dbReference type="PROSITE" id="PS00954">
    <property type="entry name" value="IGP_DEHYDRATASE_1"/>
    <property type="match status" value="1"/>
</dbReference>
<dbReference type="PROSITE" id="PS00955">
    <property type="entry name" value="IGP_DEHYDRATASE_2"/>
    <property type="match status" value="1"/>
</dbReference>
<comment type="catalytic activity">
    <reaction evidence="1">
        <text>D-erythro-1-(imidazol-4-yl)glycerol 3-phosphate = 3-(imidazol-4-yl)-2-oxopropyl phosphate + H2O</text>
        <dbReference type="Rhea" id="RHEA:11040"/>
        <dbReference type="ChEBI" id="CHEBI:15377"/>
        <dbReference type="ChEBI" id="CHEBI:57766"/>
        <dbReference type="ChEBI" id="CHEBI:58278"/>
        <dbReference type="EC" id="4.2.1.19"/>
    </reaction>
</comment>
<comment type="pathway">
    <text evidence="1">Amino-acid biosynthesis; L-histidine biosynthesis; L-histidine from 5-phospho-alpha-D-ribose 1-diphosphate: step 6/9.</text>
</comment>
<comment type="subcellular location">
    <subcellularLocation>
        <location evidence="1">Cytoplasm</location>
    </subcellularLocation>
</comment>
<comment type="similarity">
    <text evidence="1">Belongs to the imidazoleglycerol-phosphate dehydratase family.</text>
</comment>
<organism>
    <name type="scientific">Prochlorococcus marinus (strain MIT 9515)</name>
    <dbReference type="NCBI Taxonomy" id="167542"/>
    <lineage>
        <taxon>Bacteria</taxon>
        <taxon>Bacillati</taxon>
        <taxon>Cyanobacteriota</taxon>
        <taxon>Cyanophyceae</taxon>
        <taxon>Synechococcales</taxon>
        <taxon>Prochlorococcaceae</taxon>
        <taxon>Prochlorococcus</taxon>
    </lineage>
</organism>
<sequence length="201" mass="22402">MSSSRQAEIKRKTNETDISIFINIDGNGISEIDTGIPFLDHMLHQISSHGLFDLKIRAIGDTHIDDHHTNEDVGIALGKAFTKALGERKGINRFGHFFAPLDEALVQVTLDCSGRPHLSYGLKLKAPRIGNYDTELVREFFIAFVNSSGITLHINQIEGRNSHHIVEACFKAFSRSMRMATEIDLRRSGTIPSSKGMLEID</sequence>
<keyword id="KW-0028">Amino-acid biosynthesis</keyword>
<keyword id="KW-0963">Cytoplasm</keyword>
<keyword id="KW-0368">Histidine biosynthesis</keyword>
<keyword id="KW-0456">Lyase</keyword>
<accession>A2BUR2</accession>
<feature type="chain" id="PRO_1000010324" description="Imidazoleglycerol-phosphate dehydratase">
    <location>
        <begin position="1"/>
        <end position="201"/>
    </location>
</feature>
<gene>
    <name evidence="1" type="primary">hisB</name>
    <name type="ordered locus">P9515_03141</name>
</gene>
<evidence type="ECO:0000255" key="1">
    <source>
        <dbReference type="HAMAP-Rule" id="MF_00076"/>
    </source>
</evidence>
<reference key="1">
    <citation type="journal article" date="2007" name="PLoS Genet.">
        <title>Patterns and implications of gene gain and loss in the evolution of Prochlorococcus.</title>
        <authorList>
            <person name="Kettler G.C."/>
            <person name="Martiny A.C."/>
            <person name="Huang K."/>
            <person name="Zucker J."/>
            <person name="Coleman M.L."/>
            <person name="Rodrigue S."/>
            <person name="Chen F."/>
            <person name="Lapidus A."/>
            <person name="Ferriera S."/>
            <person name="Johnson J."/>
            <person name="Steglich C."/>
            <person name="Church G.M."/>
            <person name="Richardson P."/>
            <person name="Chisholm S.W."/>
        </authorList>
    </citation>
    <scope>NUCLEOTIDE SEQUENCE [LARGE SCALE GENOMIC DNA]</scope>
    <source>
        <strain>MIT 9515</strain>
    </source>
</reference>
<protein>
    <recommendedName>
        <fullName evidence="1">Imidazoleglycerol-phosphate dehydratase</fullName>
        <shortName evidence="1">IGPD</shortName>
        <ecNumber evidence="1">4.2.1.19</ecNumber>
    </recommendedName>
</protein>